<protein>
    <recommendedName>
        <fullName>Pre-mRNA-splicing factor SLU7</fullName>
    </recommendedName>
</protein>
<keyword id="KW-0507">mRNA processing</keyword>
<keyword id="KW-0508">mRNA splicing</keyword>
<keyword id="KW-0539">Nucleus</keyword>
<keyword id="KW-1185">Reference proteome</keyword>
<keyword id="KW-0747">Spliceosome</keyword>
<gene>
    <name type="primary">SLU7</name>
    <name type="ordered locus">KLLA0F14531g</name>
</gene>
<accession>Q6CK06</accession>
<name>SLU7_KLULA</name>
<evidence type="ECO:0000250" key="1"/>
<evidence type="ECO:0000256" key="2">
    <source>
        <dbReference type="SAM" id="MobiDB-lite"/>
    </source>
</evidence>
<evidence type="ECO:0000305" key="3"/>
<feature type="chain" id="PRO_0000218549" description="Pre-mRNA-splicing factor SLU7">
    <location>
        <begin position="1"/>
        <end position="341"/>
    </location>
</feature>
<feature type="region of interest" description="Disordered" evidence="2">
    <location>
        <begin position="1"/>
        <end position="90"/>
    </location>
</feature>
<feature type="region of interest" description="Disordered" evidence="2">
    <location>
        <begin position="172"/>
        <end position="196"/>
    </location>
</feature>
<feature type="region of interest" description="Disordered" evidence="2">
    <location>
        <begin position="292"/>
        <end position="341"/>
    </location>
</feature>
<feature type="compositionally biased region" description="Low complexity" evidence="2">
    <location>
        <begin position="42"/>
        <end position="57"/>
    </location>
</feature>
<feature type="compositionally biased region" description="Basic and acidic residues" evidence="2">
    <location>
        <begin position="292"/>
        <end position="301"/>
    </location>
</feature>
<feature type="compositionally biased region" description="Low complexity" evidence="2">
    <location>
        <begin position="320"/>
        <end position="331"/>
    </location>
</feature>
<organism>
    <name type="scientific">Kluyveromyces lactis (strain ATCC 8585 / CBS 2359 / DSM 70799 / NBRC 1267 / NRRL Y-1140 / WM37)</name>
    <name type="common">Yeast</name>
    <name type="synonym">Candida sphaerica</name>
    <dbReference type="NCBI Taxonomy" id="284590"/>
    <lineage>
        <taxon>Eukaryota</taxon>
        <taxon>Fungi</taxon>
        <taxon>Dikarya</taxon>
        <taxon>Ascomycota</taxon>
        <taxon>Saccharomycotina</taxon>
        <taxon>Saccharomycetes</taxon>
        <taxon>Saccharomycetales</taxon>
        <taxon>Saccharomycetaceae</taxon>
        <taxon>Kluyveromyces</taxon>
    </lineage>
</organism>
<dbReference type="EMBL" id="CR382126">
    <property type="protein sequence ID" value="CAG98441.1"/>
    <property type="molecule type" value="Genomic_DNA"/>
</dbReference>
<dbReference type="RefSeq" id="XP_455733.1">
    <property type="nucleotide sequence ID" value="XM_455733.1"/>
</dbReference>
<dbReference type="FunCoup" id="Q6CK06">
    <property type="interactions" value="557"/>
</dbReference>
<dbReference type="STRING" id="284590.Q6CK06"/>
<dbReference type="PaxDb" id="284590-Q6CK06"/>
<dbReference type="KEGG" id="kla:KLLA0_F14531g"/>
<dbReference type="eggNOG" id="KOG2560">
    <property type="taxonomic scope" value="Eukaryota"/>
</dbReference>
<dbReference type="HOGENOM" id="CLU_072877_0_0_1"/>
<dbReference type="InParanoid" id="Q6CK06"/>
<dbReference type="OMA" id="KSKMFRR"/>
<dbReference type="Proteomes" id="UP000000598">
    <property type="component" value="Chromosome F"/>
</dbReference>
<dbReference type="GO" id="GO:0005681">
    <property type="term" value="C:spliceosomal complex"/>
    <property type="evidence" value="ECO:0007669"/>
    <property type="project" value="UniProtKB-KW"/>
</dbReference>
<dbReference type="GO" id="GO:0030628">
    <property type="term" value="F:pre-mRNA 3'-splice site binding"/>
    <property type="evidence" value="ECO:0007669"/>
    <property type="project" value="InterPro"/>
</dbReference>
<dbReference type="GO" id="GO:0000398">
    <property type="term" value="P:mRNA splicing, via spliceosome"/>
    <property type="evidence" value="ECO:0007669"/>
    <property type="project" value="InterPro"/>
</dbReference>
<dbReference type="InterPro" id="IPR021715">
    <property type="entry name" value="Slu7_dom"/>
</dbReference>
<dbReference type="InterPro" id="IPR039974">
    <property type="entry name" value="Splicing_factor_SLU7"/>
</dbReference>
<dbReference type="PANTHER" id="PTHR12942:SF2">
    <property type="entry name" value="PRE-MRNA-SPLICING FACTOR SLU7"/>
    <property type="match status" value="1"/>
</dbReference>
<dbReference type="PANTHER" id="PTHR12942">
    <property type="entry name" value="STEP II SPLICING FACTOR SLU7"/>
    <property type="match status" value="1"/>
</dbReference>
<dbReference type="Pfam" id="PF11708">
    <property type="entry name" value="Slu7"/>
    <property type="match status" value="1"/>
</dbReference>
<sequence length="341" mass="38953">MRRGNSGARGNRGGSRGKPGQNEHIPNFIKNKPWYLAEESEVSASTSAINSNSTISGTGTGTGTELEEKDYLSHHRLKKSSVPDSGTAEIDDAFTYVRPSGRNRKKKDSYDLDLDAPVRRRDEKVIESNYDAKRDRWYGYTPDIKEIERNHKGPDTSHREMDEVQIQEMERLGLKPEDVGFDATQPLSGPKEKYNPVRLREDKAAYLQDMSSEEMLYDPKSRIYKSKEEGTIDPKSKMFHRHLTGDALQVGVINERVRQEAVRSGIKDFEVNKEKLNHVFAANPTKYELMMRTEPERKQETSVEQDAAPKRRKFDKNSFKESSSSSNPGSSTMKDLYDKYM</sequence>
<comment type="function">
    <text evidence="1">Involved in pre-mRNA splicing.</text>
</comment>
<comment type="subunit">
    <text evidence="1">Associated with the spliceosome.</text>
</comment>
<comment type="subcellular location">
    <subcellularLocation>
        <location evidence="1">Nucleus</location>
    </subcellularLocation>
</comment>
<comment type="similarity">
    <text evidence="3">Belongs to the SLU7 family.</text>
</comment>
<proteinExistence type="inferred from homology"/>
<reference key="1">
    <citation type="journal article" date="2004" name="Nature">
        <title>Genome evolution in yeasts.</title>
        <authorList>
            <person name="Dujon B."/>
            <person name="Sherman D."/>
            <person name="Fischer G."/>
            <person name="Durrens P."/>
            <person name="Casaregola S."/>
            <person name="Lafontaine I."/>
            <person name="de Montigny J."/>
            <person name="Marck C."/>
            <person name="Neuveglise C."/>
            <person name="Talla E."/>
            <person name="Goffard N."/>
            <person name="Frangeul L."/>
            <person name="Aigle M."/>
            <person name="Anthouard V."/>
            <person name="Babour A."/>
            <person name="Barbe V."/>
            <person name="Barnay S."/>
            <person name="Blanchin S."/>
            <person name="Beckerich J.-M."/>
            <person name="Beyne E."/>
            <person name="Bleykasten C."/>
            <person name="Boisrame A."/>
            <person name="Boyer J."/>
            <person name="Cattolico L."/>
            <person name="Confanioleri F."/>
            <person name="de Daruvar A."/>
            <person name="Despons L."/>
            <person name="Fabre E."/>
            <person name="Fairhead C."/>
            <person name="Ferry-Dumazet H."/>
            <person name="Groppi A."/>
            <person name="Hantraye F."/>
            <person name="Hennequin C."/>
            <person name="Jauniaux N."/>
            <person name="Joyet P."/>
            <person name="Kachouri R."/>
            <person name="Kerrest A."/>
            <person name="Koszul R."/>
            <person name="Lemaire M."/>
            <person name="Lesur I."/>
            <person name="Ma L."/>
            <person name="Muller H."/>
            <person name="Nicaud J.-M."/>
            <person name="Nikolski M."/>
            <person name="Oztas S."/>
            <person name="Ozier-Kalogeropoulos O."/>
            <person name="Pellenz S."/>
            <person name="Potier S."/>
            <person name="Richard G.-F."/>
            <person name="Straub M.-L."/>
            <person name="Suleau A."/>
            <person name="Swennen D."/>
            <person name="Tekaia F."/>
            <person name="Wesolowski-Louvel M."/>
            <person name="Westhof E."/>
            <person name="Wirth B."/>
            <person name="Zeniou-Meyer M."/>
            <person name="Zivanovic Y."/>
            <person name="Bolotin-Fukuhara M."/>
            <person name="Thierry A."/>
            <person name="Bouchier C."/>
            <person name="Caudron B."/>
            <person name="Scarpelli C."/>
            <person name="Gaillardin C."/>
            <person name="Weissenbach J."/>
            <person name="Wincker P."/>
            <person name="Souciet J.-L."/>
        </authorList>
    </citation>
    <scope>NUCLEOTIDE SEQUENCE [LARGE SCALE GENOMIC DNA]</scope>
    <source>
        <strain>ATCC 8585 / CBS 2359 / DSM 70799 / NBRC 1267 / NRRL Y-1140 / WM37</strain>
    </source>
</reference>